<gene>
    <name evidence="4" type="primary">Chpt1</name>
    <name type="synonym">Cpt1</name>
</gene>
<accession>Q66H21</accession>
<feature type="initiator methionine" description="Removed" evidence="2">
    <location>
        <position position="1"/>
    </location>
</feature>
<feature type="chain" id="PRO_0000289254" description="Cholinephosphotransferase 1">
    <location>
        <begin position="2"/>
        <end position="398"/>
    </location>
</feature>
<feature type="topological domain" description="Cytoplasmic" evidence="3">
    <location>
        <begin position="2"/>
        <end position="62"/>
    </location>
</feature>
<feature type="transmembrane region" description="Helical; Name=1" evidence="1">
    <location>
        <begin position="63"/>
        <end position="83"/>
    </location>
</feature>
<feature type="topological domain" description="Lumenal" evidence="3">
    <location>
        <begin position="84"/>
        <end position="93"/>
    </location>
</feature>
<feature type="transmembrane region" description="Helical; Name=2" evidence="1">
    <location>
        <begin position="94"/>
        <end position="118"/>
    </location>
</feature>
<feature type="topological domain" description="Cytoplasmic" evidence="3">
    <location>
        <begin position="119"/>
        <end position="125"/>
    </location>
</feature>
<feature type="transmembrane region" description="Helical; Name=3" evidence="1">
    <location>
        <begin position="126"/>
        <end position="150"/>
    </location>
</feature>
<feature type="topological domain" description="Lumenal" evidence="3">
    <location>
        <begin position="151"/>
        <end position="160"/>
    </location>
</feature>
<feature type="transmembrane region" description="Helical; Name=4" evidence="1">
    <location>
        <begin position="161"/>
        <end position="179"/>
    </location>
</feature>
<feature type="topological domain" description="Cytoplasmic" evidence="3">
    <location>
        <begin position="180"/>
        <end position="190"/>
    </location>
</feature>
<feature type="transmembrane region" description="Helical; Name=5" evidence="1">
    <location>
        <begin position="191"/>
        <end position="207"/>
    </location>
</feature>
<feature type="topological domain" description="Lumenal" evidence="3">
    <location>
        <begin position="208"/>
        <end position="222"/>
    </location>
</feature>
<feature type="transmembrane region" description="Helical; Name=6" evidence="1">
    <location>
        <begin position="223"/>
        <end position="248"/>
    </location>
</feature>
<feature type="topological domain" description="Cytoplasmic" evidence="3">
    <location>
        <begin position="249"/>
        <end position="265"/>
    </location>
</feature>
<feature type="transmembrane region" description="Helical; Name=7" evidence="1">
    <location>
        <begin position="266"/>
        <end position="281"/>
    </location>
</feature>
<feature type="topological domain" description="Lumenal" evidence="3">
    <location>
        <begin position="282"/>
        <end position="293"/>
    </location>
</feature>
<feature type="transmembrane region" description="Helical; Name=8" evidence="1">
    <location>
        <begin position="294"/>
        <end position="316"/>
    </location>
</feature>
<feature type="topological domain" description="Cytoplasmic" evidence="3">
    <location>
        <begin position="317"/>
        <end position="329"/>
    </location>
</feature>
<feature type="transmembrane region" description="Helical; Name=9" evidence="1">
    <location>
        <begin position="330"/>
        <end position="339"/>
    </location>
</feature>
<feature type="topological domain" description="Lumenal" evidence="3">
    <location>
        <begin position="340"/>
        <end position="346"/>
    </location>
</feature>
<feature type="transmembrane region" description="Helical; Name=10" evidence="1">
    <location>
        <begin position="347"/>
        <end position="376"/>
    </location>
</feature>
<feature type="topological domain" description="Cytoplasmic" evidence="3">
    <location>
        <begin position="377"/>
        <end position="398"/>
    </location>
</feature>
<feature type="active site" description="Proton acceptor" evidence="1">
    <location>
        <position position="133"/>
    </location>
</feature>
<feature type="binding site" evidence="1">
    <location>
        <position position="64"/>
    </location>
    <ligand>
        <name>CDP-choline</name>
        <dbReference type="ChEBI" id="CHEBI:58779"/>
    </ligand>
</feature>
<feature type="binding site" evidence="1">
    <location>
        <position position="111"/>
    </location>
    <ligand>
        <name>Mg(2+)</name>
        <dbReference type="ChEBI" id="CHEBI:18420"/>
        <label>1</label>
    </ligand>
</feature>
<feature type="binding site" evidence="1">
    <location>
        <position position="111"/>
    </location>
    <ligand>
        <name>Mg(2+)</name>
        <dbReference type="ChEBI" id="CHEBI:18420"/>
        <label>2</label>
    </ligand>
</feature>
<feature type="binding site" evidence="1">
    <location>
        <position position="114"/>
    </location>
    <ligand>
        <name>Mg(2+)</name>
        <dbReference type="ChEBI" id="CHEBI:18420"/>
        <label>1</label>
    </ligand>
</feature>
<feature type="binding site" evidence="1">
    <location>
        <position position="119"/>
    </location>
    <ligand>
        <name>CDP-choline</name>
        <dbReference type="ChEBI" id="CHEBI:58779"/>
    </ligand>
</feature>
<feature type="binding site" evidence="1">
    <location>
        <position position="132"/>
    </location>
    <ligand>
        <name>Mg(2+)</name>
        <dbReference type="ChEBI" id="CHEBI:18420"/>
        <label>1</label>
    </ligand>
</feature>
<feature type="binding site" evidence="1">
    <location>
        <position position="132"/>
    </location>
    <ligand>
        <name>Mg(2+)</name>
        <dbReference type="ChEBI" id="CHEBI:18420"/>
        <label>2</label>
    </ligand>
</feature>
<feature type="binding site" evidence="1">
    <location>
        <position position="136"/>
    </location>
    <ligand>
        <name>Mg(2+)</name>
        <dbReference type="ChEBI" id="CHEBI:18420"/>
        <label>2</label>
    </ligand>
</feature>
<feature type="site" description="Increases basicity of active site His" evidence="1">
    <location>
        <position position="129"/>
    </location>
</feature>
<feature type="modified residue" description="N-acetylalanine" evidence="2">
    <location>
        <position position="2"/>
    </location>
</feature>
<name>CHPT1_RAT</name>
<protein>
    <recommendedName>
        <fullName evidence="3">Cholinephosphotransferase 1</fullName>
        <ecNumber evidence="2">2.7.8.2</ecNumber>
    </recommendedName>
    <alternativeName>
        <fullName>Diacylglycerol cholinephosphotransferase 1</fullName>
    </alternativeName>
</protein>
<keyword id="KW-0007">Acetylation</keyword>
<keyword id="KW-0333">Golgi apparatus</keyword>
<keyword id="KW-0444">Lipid biosynthesis</keyword>
<keyword id="KW-0443">Lipid metabolism</keyword>
<keyword id="KW-0460">Magnesium</keyword>
<keyword id="KW-0464">Manganese</keyword>
<keyword id="KW-0472">Membrane</keyword>
<keyword id="KW-0479">Metal-binding</keyword>
<keyword id="KW-0594">Phospholipid biosynthesis</keyword>
<keyword id="KW-1208">Phospholipid metabolism</keyword>
<keyword id="KW-1185">Reference proteome</keyword>
<keyword id="KW-0808">Transferase</keyword>
<keyword id="KW-0812">Transmembrane</keyword>
<keyword id="KW-1133">Transmembrane helix</keyword>
<sequence length="398" mass="44601">MAAGAGARPAPRWVKALGEPLSAAQLRRLEDHRYSAAGESLFEPPLQLFWTWLLQWIPLWIAPNTITLFGLAINLFTTLVLIFYCPTVTEEAPYWTYLLCALGLFIYQSLDAIDGKQARRTNSCSPLGELFDHGCDSLSTVFMAIGASIAVRLGTHPDWLFFCSFVGMFMFYCAHWQTYVSGVLRFGRVDVTEIQVALVIVFLLSTFGGAMMWDYTIPILEIKLKILPVLGVVGGLIFSCSNYFHVILHGGVGKNGSTIAGTSVLSPGLHIGLIIILAIMIYKKSATNVFEKHPCLYTLMFGCVFAKVAQKLVIAHMTKSELYLQDTVFIGPGLLFLDQYFNNFIDEYVVLWIAMVITSFDMMIYFSSLCLQISRHLHLSIFKTSYQQAPEQVHKHID</sequence>
<proteinExistence type="evidence at transcript level"/>
<comment type="function">
    <text evidence="2">Catalyzes the final step of de novo phosphatidylcholine (PC) synthesis, i.e. the transfer of choline phosphate from CDP-choline to the free hydroxyl of a diacylglycerol (DAG), producing a PC. It thereby plays a central role in the formation and maintenance of vesicular membranes.</text>
</comment>
<comment type="catalytic activity">
    <reaction evidence="2">
        <text>CDP-choline + a 1,2-diacyl-sn-glycerol = a 1,2-diacyl-sn-glycero-3-phosphocholine + CMP + H(+)</text>
        <dbReference type="Rhea" id="RHEA:32939"/>
        <dbReference type="ChEBI" id="CHEBI:15378"/>
        <dbReference type="ChEBI" id="CHEBI:17815"/>
        <dbReference type="ChEBI" id="CHEBI:57643"/>
        <dbReference type="ChEBI" id="CHEBI:58779"/>
        <dbReference type="ChEBI" id="CHEBI:60377"/>
        <dbReference type="EC" id="2.7.8.2"/>
    </reaction>
    <physiologicalReaction direction="left-to-right" evidence="2">
        <dbReference type="Rhea" id="RHEA:32940"/>
    </physiologicalReaction>
</comment>
<comment type="catalytic activity">
    <reaction evidence="2">
        <text>1-octadecanoyl-2-(5Z,8Z,11Z,14Z-eicosatetraenoyl)-sn-glycerol + CDP-choline = 1-octadecanoyl-2-(5Z,8Z,11Z,14Z-eicosatetraenoyl)-sn-glycero-3-phosphocholine + CMP + H(+)</text>
        <dbReference type="Rhea" id="RHEA:54344"/>
        <dbReference type="ChEBI" id="CHEBI:15378"/>
        <dbReference type="ChEBI" id="CHEBI:58779"/>
        <dbReference type="ChEBI" id="CHEBI:60377"/>
        <dbReference type="ChEBI" id="CHEBI:74965"/>
        <dbReference type="ChEBI" id="CHEBI:75728"/>
    </reaction>
    <physiologicalReaction direction="left-to-right" evidence="2">
        <dbReference type="Rhea" id="RHEA:54345"/>
    </physiologicalReaction>
</comment>
<comment type="catalytic activity">
    <reaction evidence="2">
        <text>1-hexadecanoyl-2-(9Z-octadecenoyl)-sn-glycerol + CDP-choline = 1-hexadecanoyl-2-(9Z-octadecenoyl)-sn-glycero-3-phosphocholine + CMP + H(+)</text>
        <dbReference type="Rhea" id="RHEA:54244"/>
        <dbReference type="ChEBI" id="CHEBI:15378"/>
        <dbReference type="ChEBI" id="CHEBI:58779"/>
        <dbReference type="ChEBI" id="CHEBI:60377"/>
        <dbReference type="ChEBI" id="CHEBI:73001"/>
        <dbReference type="ChEBI" id="CHEBI:75466"/>
    </reaction>
    <physiologicalReaction direction="left-to-right" evidence="2">
        <dbReference type="Rhea" id="RHEA:54245"/>
    </physiologicalReaction>
</comment>
<comment type="catalytic activity">
    <reaction evidence="2">
        <text>1-hexadecanoyl-2-(4Z,7Z,10Z,13Z,16Z,19Z-docosahexaenoyl)-sn-glycerol + CDP-choline = 1-hexadecanoyl-2-(4Z,7Z,10Z,13Z,16Z,19Z-docosahexaenoyl)-sn-glycero-3-phosphocholine + CMP + H(+)</text>
        <dbReference type="Rhea" id="RHEA:54332"/>
        <dbReference type="ChEBI" id="CHEBI:15378"/>
        <dbReference type="ChEBI" id="CHEBI:58779"/>
        <dbReference type="ChEBI" id="CHEBI:60377"/>
        <dbReference type="ChEBI" id="CHEBI:74963"/>
        <dbReference type="ChEBI" id="CHEBI:82949"/>
    </reaction>
    <physiologicalReaction direction="left-to-right" evidence="2">
        <dbReference type="Rhea" id="RHEA:54333"/>
    </physiologicalReaction>
</comment>
<comment type="catalytic activity">
    <reaction evidence="1">
        <text>1,2-dioctanoyl-sn-glycerol + CDP-choline = 1,2-dioctanoyl-sn-glycero-3-phosphocholine + CMP + H(+)</text>
        <dbReference type="Rhea" id="RHEA:54232"/>
        <dbReference type="ChEBI" id="CHEBI:15378"/>
        <dbReference type="ChEBI" id="CHEBI:58779"/>
        <dbReference type="ChEBI" id="CHEBI:60377"/>
        <dbReference type="ChEBI" id="CHEBI:76979"/>
        <dbReference type="ChEBI" id="CHEBI:78228"/>
    </reaction>
    <physiologicalReaction direction="left-to-right" evidence="1">
        <dbReference type="Rhea" id="RHEA:54233"/>
    </physiologicalReaction>
</comment>
<comment type="cofactor">
    <cofactor evidence="2">
        <name>Mg(2+)</name>
        <dbReference type="ChEBI" id="CHEBI:18420"/>
    </cofactor>
    <cofactor evidence="2">
        <name>Mn(2+)</name>
        <dbReference type="ChEBI" id="CHEBI:29035"/>
    </cofactor>
</comment>
<comment type="pathway">
    <text evidence="2">Phospholipid metabolism; phosphatidylcholine biosynthesis; phosphatidylcholine from phosphocholine: step 2/2.</text>
</comment>
<comment type="subcellular location">
    <subcellularLocation>
        <location evidence="2">Golgi apparatus membrane</location>
        <topology evidence="2">Multi-pass membrane protein</topology>
    </subcellularLocation>
</comment>
<comment type="similarity">
    <text evidence="3">Belongs to the CDP-alcohol phosphatidyltransferase class-I family.</text>
</comment>
<reference key="1">
    <citation type="journal article" date="2004" name="Genome Res.">
        <title>The status, quality, and expansion of the NIH full-length cDNA project: the Mammalian Gene Collection (MGC).</title>
        <authorList>
            <consortium name="The MGC Project Team"/>
        </authorList>
    </citation>
    <scope>NUCLEOTIDE SEQUENCE [LARGE SCALE MRNA]</scope>
    <source>
        <tissue>Testis</tissue>
    </source>
</reference>
<evidence type="ECO:0000250" key="1">
    <source>
        <dbReference type="UniProtKB" id="Q4KLV1"/>
    </source>
</evidence>
<evidence type="ECO:0000250" key="2">
    <source>
        <dbReference type="UniProtKB" id="Q8WUD6"/>
    </source>
</evidence>
<evidence type="ECO:0000305" key="3"/>
<evidence type="ECO:0000312" key="4">
    <source>
        <dbReference type="RGD" id="1359283"/>
    </source>
</evidence>
<dbReference type="EC" id="2.7.8.2" evidence="2"/>
<dbReference type="EMBL" id="BC082074">
    <property type="protein sequence ID" value="AAH82074.1"/>
    <property type="molecule type" value="mRNA"/>
</dbReference>
<dbReference type="RefSeq" id="NP_001007751.1">
    <property type="nucleotide sequence ID" value="NM_001007750.1"/>
</dbReference>
<dbReference type="SMR" id="Q66H21"/>
<dbReference type="FunCoup" id="Q66H21">
    <property type="interactions" value="2202"/>
</dbReference>
<dbReference type="STRING" id="10116.ENSRNOP00000072444"/>
<dbReference type="PhosphoSitePlus" id="Q66H21"/>
<dbReference type="PaxDb" id="10116-ENSRNOP00000007305"/>
<dbReference type="Ensembl" id="ENSRNOT00000080939.2">
    <property type="protein sequence ID" value="ENSRNOP00000072444.1"/>
    <property type="gene ID" value="ENSRNOG00000058271.2"/>
</dbReference>
<dbReference type="UCSC" id="RGD:1359283">
    <property type="organism name" value="rat"/>
</dbReference>
<dbReference type="AGR" id="RGD:1359283"/>
<dbReference type="RGD" id="1359283">
    <property type="gene designation" value="Chpt1"/>
</dbReference>
<dbReference type="eggNOG" id="KOG2877">
    <property type="taxonomic scope" value="Eukaryota"/>
</dbReference>
<dbReference type="GeneTree" id="ENSGT00950000183117"/>
<dbReference type="HOGENOM" id="CLU_035066_1_0_1"/>
<dbReference type="InParanoid" id="Q66H21"/>
<dbReference type="PhylomeDB" id="Q66H21"/>
<dbReference type="TreeFam" id="TF313270"/>
<dbReference type="Reactome" id="R-RNO-1483191">
    <property type="pathway name" value="Synthesis of PC"/>
</dbReference>
<dbReference type="UniPathway" id="UPA00753">
    <property type="reaction ID" value="UER00740"/>
</dbReference>
<dbReference type="PRO" id="PR:Q66H21"/>
<dbReference type="Proteomes" id="UP000002494">
    <property type="component" value="Chromosome 7"/>
</dbReference>
<dbReference type="Bgee" id="ENSRNOG00000058271">
    <property type="expression patterns" value="Expressed in adult mammalian kidney and 18 other cell types or tissues"/>
</dbReference>
<dbReference type="GO" id="GO:0005789">
    <property type="term" value="C:endoplasmic reticulum membrane"/>
    <property type="evidence" value="ECO:0000318"/>
    <property type="project" value="GO_Central"/>
</dbReference>
<dbReference type="GO" id="GO:0005794">
    <property type="term" value="C:Golgi apparatus"/>
    <property type="evidence" value="ECO:0000266"/>
    <property type="project" value="RGD"/>
</dbReference>
<dbReference type="GO" id="GO:0000139">
    <property type="term" value="C:Golgi membrane"/>
    <property type="evidence" value="ECO:0000266"/>
    <property type="project" value="RGD"/>
</dbReference>
<dbReference type="GO" id="GO:0004142">
    <property type="term" value="F:diacylglycerol cholinephosphotransferase activity"/>
    <property type="evidence" value="ECO:0000266"/>
    <property type="project" value="RGD"/>
</dbReference>
<dbReference type="GO" id="GO:0046872">
    <property type="term" value="F:metal ion binding"/>
    <property type="evidence" value="ECO:0007669"/>
    <property type="project" value="UniProtKB-KW"/>
</dbReference>
<dbReference type="GO" id="GO:0016780">
    <property type="term" value="F:phosphotransferase activity, for other substituted phosphate groups"/>
    <property type="evidence" value="ECO:0000266"/>
    <property type="project" value="RGD"/>
</dbReference>
<dbReference type="GO" id="GO:0006656">
    <property type="term" value="P:phosphatidylcholine biosynthetic process"/>
    <property type="evidence" value="ECO:0000266"/>
    <property type="project" value="RGD"/>
</dbReference>
<dbReference type="GO" id="GO:0006663">
    <property type="term" value="P:platelet activating factor biosynthetic process"/>
    <property type="evidence" value="ECO:0000266"/>
    <property type="project" value="RGD"/>
</dbReference>
<dbReference type="FunFam" id="1.20.120.1760:FF:000002">
    <property type="entry name" value="Choline/ethanolamine phosphotransferase 1"/>
    <property type="match status" value="1"/>
</dbReference>
<dbReference type="Gene3D" id="1.20.120.1760">
    <property type="match status" value="1"/>
</dbReference>
<dbReference type="InterPro" id="IPR000462">
    <property type="entry name" value="CDP-OH_P_trans"/>
</dbReference>
<dbReference type="InterPro" id="IPR043130">
    <property type="entry name" value="CDP-OH_PTrfase_TM_dom"/>
</dbReference>
<dbReference type="InterPro" id="IPR048254">
    <property type="entry name" value="CDP_ALCOHOL_P_TRANSF_CS"/>
</dbReference>
<dbReference type="InterPro" id="IPR014472">
    <property type="entry name" value="CHOPT"/>
</dbReference>
<dbReference type="PANTHER" id="PTHR10414:SF32">
    <property type="entry name" value="CHOLINEPHOSPHOTRANSFERASE 1"/>
    <property type="match status" value="1"/>
</dbReference>
<dbReference type="PANTHER" id="PTHR10414">
    <property type="entry name" value="ETHANOLAMINEPHOSPHOTRANSFERASE"/>
    <property type="match status" value="1"/>
</dbReference>
<dbReference type="Pfam" id="PF01066">
    <property type="entry name" value="CDP-OH_P_transf"/>
    <property type="match status" value="1"/>
</dbReference>
<dbReference type="PIRSF" id="PIRSF015665">
    <property type="entry name" value="CHOPT"/>
    <property type="match status" value="1"/>
</dbReference>
<dbReference type="PROSITE" id="PS00379">
    <property type="entry name" value="CDP_ALCOHOL_P_TRANSF"/>
    <property type="match status" value="1"/>
</dbReference>
<organism>
    <name type="scientific">Rattus norvegicus</name>
    <name type="common">Rat</name>
    <dbReference type="NCBI Taxonomy" id="10116"/>
    <lineage>
        <taxon>Eukaryota</taxon>
        <taxon>Metazoa</taxon>
        <taxon>Chordata</taxon>
        <taxon>Craniata</taxon>
        <taxon>Vertebrata</taxon>
        <taxon>Euteleostomi</taxon>
        <taxon>Mammalia</taxon>
        <taxon>Eutheria</taxon>
        <taxon>Euarchontoglires</taxon>
        <taxon>Glires</taxon>
        <taxon>Rodentia</taxon>
        <taxon>Myomorpha</taxon>
        <taxon>Muroidea</taxon>
        <taxon>Muridae</taxon>
        <taxon>Murinae</taxon>
        <taxon>Rattus</taxon>
    </lineage>
</organism>